<protein>
    <recommendedName>
        <fullName>F-actin-capping protein subunit alpha-2</fullName>
    </recommendedName>
    <alternativeName>
        <fullName>CapZ alpha-2</fullName>
    </alternativeName>
</protein>
<organism>
    <name type="scientific">Papio anubis</name>
    <name type="common">Olive baboon</name>
    <dbReference type="NCBI Taxonomy" id="9555"/>
    <lineage>
        <taxon>Eukaryota</taxon>
        <taxon>Metazoa</taxon>
        <taxon>Chordata</taxon>
        <taxon>Craniata</taxon>
        <taxon>Vertebrata</taxon>
        <taxon>Euteleostomi</taxon>
        <taxon>Mammalia</taxon>
        <taxon>Eutheria</taxon>
        <taxon>Euarchontoglires</taxon>
        <taxon>Primates</taxon>
        <taxon>Haplorrhini</taxon>
        <taxon>Catarrhini</taxon>
        <taxon>Cercopithecidae</taxon>
        <taxon>Cercopithecinae</taxon>
        <taxon>Papio</taxon>
    </lineage>
</organism>
<feature type="initiator methionine" description="Removed" evidence="2">
    <location>
        <position position="1"/>
    </location>
</feature>
<feature type="chain" id="PRO_0000279203" description="F-actin-capping protein subunit alpha-2">
    <location>
        <begin position="2"/>
        <end position="286"/>
    </location>
</feature>
<feature type="modified residue" description="N-acetylalanine" evidence="2">
    <location>
        <position position="2"/>
    </location>
</feature>
<feature type="modified residue" description="Phosphoserine" evidence="2">
    <location>
        <position position="9"/>
    </location>
</feature>
<reference key="1">
    <citation type="journal article" date="2003" name="Nature">
        <title>Comparative analyses of multi-species sequences from targeted genomic regions.</title>
        <authorList>
            <person name="Thomas J.W."/>
            <person name="Touchman J.W."/>
            <person name="Blakesley R.W."/>
            <person name="Bouffard G.G."/>
            <person name="Beckstrom-Sternberg S.M."/>
            <person name="Margulies E.H."/>
            <person name="Blanchette M."/>
            <person name="Siepel A.C."/>
            <person name="Thomas P.J."/>
            <person name="McDowell J.C."/>
            <person name="Maskeri B."/>
            <person name="Hansen N.F."/>
            <person name="Schwartz M.S."/>
            <person name="Weber R.J."/>
            <person name="Kent W.J."/>
            <person name="Karolchik D."/>
            <person name="Bruen T.C."/>
            <person name="Bevan R."/>
            <person name="Cutler D.J."/>
            <person name="Schwartz S."/>
            <person name="Elnitski L."/>
            <person name="Idol J.R."/>
            <person name="Prasad A.B."/>
            <person name="Lee-Lin S.-Q."/>
            <person name="Maduro V.V.B."/>
            <person name="Summers T.J."/>
            <person name="Portnoy M.E."/>
            <person name="Dietrich N.L."/>
            <person name="Akhter N."/>
            <person name="Ayele K."/>
            <person name="Benjamin B."/>
            <person name="Cariaga K."/>
            <person name="Brinkley C.P."/>
            <person name="Brooks S.Y."/>
            <person name="Granite S."/>
            <person name="Guan X."/>
            <person name="Gupta J."/>
            <person name="Haghighi P."/>
            <person name="Ho S.-L."/>
            <person name="Huang M.C."/>
            <person name="Karlins E."/>
            <person name="Laric P.L."/>
            <person name="Legaspi R."/>
            <person name="Lim M.J."/>
            <person name="Maduro Q.L."/>
            <person name="Masiello C.A."/>
            <person name="Mastrian S.D."/>
            <person name="McCloskey J.C."/>
            <person name="Pearson R."/>
            <person name="Stantripop S."/>
            <person name="Tiongson E.E."/>
            <person name="Tran J.T."/>
            <person name="Tsurgeon C."/>
            <person name="Vogt J.L."/>
            <person name="Walker M.A."/>
            <person name="Wetherby K.D."/>
            <person name="Wiggins L.S."/>
            <person name="Young A.C."/>
            <person name="Zhang L.-H."/>
            <person name="Osoegawa K."/>
            <person name="Zhu B."/>
            <person name="Zhao B."/>
            <person name="Shu C.L."/>
            <person name="De Jong P.J."/>
            <person name="Lawrence C.E."/>
            <person name="Smit A.F."/>
            <person name="Chakravarti A."/>
            <person name="Haussler D."/>
            <person name="Green P."/>
            <person name="Miller W."/>
            <person name="Green E.D."/>
        </authorList>
    </citation>
    <scope>NUCLEOTIDE SEQUENCE [LARGE SCALE GENOMIC DNA]</scope>
</reference>
<accession>A0M8R8</accession>
<gene>
    <name type="primary">CAPZA2</name>
</gene>
<sequence length="286" mass="32949">MADLEEQLSDEEKVRIAAKFIIHAPPGEFNEVFNDVRLLLNNDNLLREGAAHAFAQYNLDQFTPVKIEGYEDQVLITEHGDLGNGKFLDPKNRICFKFDHLRKEATDPRPCEVENAVESWRTSVETALRAYVKEHYPNGVCTVYGKKIDGQQTIIACIESHQFQAKNFWNGRWRSEWKFTITPSTTQVVGILKIQVHYYEDGNVQLVSHKDIQDSLTVSNEVQTAKEFIKIVEAAENEYQTAISENYQTMSDTTFKALRRQLPVTRTKIDWNKILSYKIGKEMQNA</sequence>
<proteinExistence type="inferred from homology"/>
<keyword id="KW-0007">Acetylation</keyword>
<keyword id="KW-0117">Actin capping</keyword>
<keyword id="KW-0009">Actin-binding</keyword>
<keyword id="KW-0597">Phosphoprotein</keyword>
<keyword id="KW-1185">Reference proteome</keyword>
<dbReference type="EMBL" id="DP000233">
    <property type="protein sequence ID" value="AAR16222.1"/>
    <property type="molecule type" value="Genomic_DNA"/>
</dbReference>
<dbReference type="RefSeq" id="NP_001162188.1">
    <property type="nucleotide sequence ID" value="NM_001168717.1"/>
</dbReference>
<dbReference type="SMR" id="A0M8R8"/>
<dbReference type="STRING" id="9555.ENSPANP00000021484"/>
<dbReference type="Ensembl" id="ENSPANT00000056694.2">
    <property type="protein sequence ID" value="ENSPANP00000021484.1"/>
    <property type="gene ID" value="ENSPANG00000024714.3"/>
</dbReference>
<dbReference type="GeneID" id="100126673"/>
<dbReference type="KEGG" id="panu:100126673"/>
<dbReference type="CTD" id="830"/>
<dbReference type="eggNOG" id="KOG0836">
    <property type="taxonomic scope" value="Eukaryota"/>
</dbReference>
<dbReference type="GeneTree" id="ENSGT00950000183119"/>
<dbReference type="HOGENOM" id="CLU_045161_0_0_1"/>
<dbReference type="OMA" id="VACIEDH"/>
<dbReference type="OrthoDB" id="3471at314294"/>
<dbReference type="Proteomes" id="UP000028761">
    <property type="component" value="Chromosome 4"/>
</dbReference>
<dbReference type="Bgee" id="ENSPANG00000024714">
    <property type="expression patterns" value="Expressed in abdominal segment muscle and 65 other cell types or tissues"/>
</dbReference>
<dbReference type="ExpressionAtlas" id="A0M8R8">
    <property type="expression patterns" value="baseline"/>
</dbReference>
<dbReference type="GO" id="GO:0030863">
    <property type="term" value="C:cortical cytoskeleton"/>
    <property type="evidence" value="ECO:0007669"/>
    <property type="project" value="TreeGrafter"/>
</dbReference>
<dbReference type="GO" id="GO:0008290">
    <property type="term" value="C:F-actin capping protein complex"/>
    <property type="evidence" value="ECO:0007669"/>
    <property type="project" value="InterPro"/>
</dbReference>
<dbReference type="GO" id="GO:0051015">
    <property type="term" value="F:actin filament binding"/>
    <property type="evidence" value="ECO:0007669"/>
    <property type="project" value="TreeGrafter"/>
</dbReference>
<dbReference type="GO" id="GO:0030036">
    <property type="term" value="P:actin cytoskeleton organization"/>
    <property type="evidence" value="ECO:0007669"/>
    <property type="project" value="TreeGrafter"/>
</dbReference>
<dbReference type="GO" id="GO:0051016">
    <property type="term" value="P:barbed-end actin filament capping"/>
    <property type="evidence" value="ECO:0007669"/>
    <property type="project" value="InterPro"/>
</dbReference>
<dbReference type="FunFam" id="3.30.1140.60:FF:000001">
    <property type="entry name" value="F-actin-capping protein subunit alpha"/>
    <property type="match status" value="1"/>
</dbReference>
<dbReference type="FunFam" id="3.90.1150.210:FF:000002">
    <property type="entry name" value="F-actin-capping protein subunit alpha"/>
    <property type="match status" value="1"/>
</dbReference>
<dbReference type="Gene3D" id="3.30.1140.60">
    <property type="entry name" value="F-actin capping protein, alpha subunit"/>
    <property type="match status" value="1"/>
</dbReference>
<dbReference type="Gene3D" id="3.90.1150.210">
    <property type="entry name" value="F-actin capping protein, beta subunit"/>
    <property type="match status" value="1"/>
</dbReference>
<dbReference type="InterPro" id="IPR002189">
    <property type="entry name" value="CapZ_alpha"/>
</dbReference>
<dbReference type="InterPro" id="IPR037282">
    <property type="entry name" value="CapZ_alpha/beta"/>
</dbReference>
<dbReference type="InterPro" id="IPR042276">
    <property type="entry name" value="CapZ_alpha/beta_2"/>
</dbReference>
<dbReference type="InterPro" id="IPR042489">
    <property type="entry name" value="CapZ_alpha_1"/>
</dbReference>
<dbReference type="InterPro" id="IPR017865">
    <property type="entry name" value="F-actin_cap_asu_CS"/>
</dbReference>
<dbReference type="PANTHER" id="PTHR10653">
    <property type="entry name" value="F-ACTIN-CAPPING PROTEIN SUBUNIT ALPHA"/>
    <property type="match status" value="1"/>
</dbReference>
<dbReference type="PANTHER" id="PTHR10653:SF2">
    <property type="entry name" value="F-ACTIN-CAPPING PROTEIN SUBUNIT ALPHA-2"/>
    <property type="match status" value="1"/>
</dbReference>
<dbReference type="Pfam" id="PF01267">
    <property type="entry name" value="F-actin_cap_A"/>
    <property type="match status" value="1"/>
</dbReference>
<dbReference type="PRINTS" id="PR00191">
    <property type="entry name" value="FACTINCAPA"/>
</dbReference>
<dbReference type="SUPFAM" id="SSF90096">
    <property type="entry name" value="Subunits of heterodimeric actin filament capping protein Capz"/>
    <property type="match status" value="1"/>
</dbReference>
<dbReference type="PROSITE" id="PS00748">
    <property type="entry name" value="F_ACTIN_CAPPING_A_1"/>
    <property type="match status" value="1"/>
</dbReference>
<dbReference type="PROSITE" id="PS00749">
    <property type="entry name" value="F_ACTIN_CAPPING_A_2"/>
    <property type="match status" value="1"/>
</dbReference>
<evidence type="ECO:0000250" key="1"/>
<evidence type="ECO:0000250" key="2">
    <source>
        <dbReference type="UniProtKB" id="P47755"/>
    </source>
</evidence>
<evidence type="ECO:0000305" key="3"/>
<name>CAZA2_PAPAN</name>
<comment type="function">
    <text evidence="1">F-actin-capping proteins bind in a Ca(2+)-independent manner to the fast growing ends of actin filaments (barbed end) thereby blocking the exchange of subunits at these ends. Unlike other capping proteins (such as gelsolin and severin), these proteins do not sever actin filaments (By similarity).</text>
</comment>
<comment type="subunit">
    <text evidence="1">Component of the F-actin capping complex, composed of a heterodimer of an alpha and a beta subunit. Component of the WASH complex, composed of F-actin-capping protein subunit alpha (CAPZA1, CAPZA2 or CAPZA3), F-actin-capping protein subunit beta (CAPZB), WASHC1, WASHC2, WASHC3, WASHC4 and WASHC5. Interacts with RCSD1/CAPZIP (By similarity).</text>
</comment>
<comment type="similarity">
    <text evidence="3">Belongs to the F-actin-capping protein alpha subunit family.</text>
</comment>